<accession>Q5EBI0</accession>
<accession>A0A1Y7VKB5</accession>
<organism>
    <name type="scientific">Mus musculus</name>
    <name type="common">Mouse</name>
    <dbReference type="NCBI Taxonomy" id="10090"/>
    <lineage>
        <taxon>Eukaryota</taxon>
        <taxon>Metazoa</taxon>
        <taxon>Chordata</taxon>
        <taxon>Craniata</taxon>
        <taxon>Vertebrata</taxon>
        <taxon>Euteleostomi</taxon>
        <taxon>Mammalia</taxon>
        <taxon>Eutheria</taxon>
        <taxon>Euarchontoglires</taxon>
        <taxon>Glires</taxon>
        <taxon>Rodentia</taxon>
        <taxon>Myomorpha</taxon>
        <taxon>Muroidea</taxon>
        <taxon>Muridae</taxon>
        <taxon>Murinae</taxon>
        <taxon>Mus</taxon>
        <taxon>Mus</taxon>
    </lineage>
</organism>
<dbReference type="EMBL" id="AC144852">
    <property type="status" value="NOT_ANNOTATED_CDS"/>
    <property type="molecule type" value="Genomic_DNA"/>
</dbReference>
<dbReference type="EMBL" id="BC089587">
    <property type="protein sequence ID" value="AAH89587.1"/>
    <property type="status" value="ALT_SEQ"/>
    <property type="molecule type" value="mRNA"/>
</dbReference>
<dbReference type="CCDS" id="CCDS48714.2"/>
<dbReference type="RefSeq" id="NP_808283.3">
    <property type="nucleotide sequence ID" value="NM_177615.4"/>
</dbReference>
<dbReference type="SMR" id="Q5EBI0"/>
<dbReference type="FunCoup" id="Q5EBI0">
    <property type="interactions" value="18"/>
</dbReference>
<dbReference type="STRING" id="10090.ENSMUSP00000092904"/>
<dbReference type="GlyGen" id="Q5EBI0">
    <property type="glycosylation" value="1 site"/>
</dbReference>
<dbReference type="PhosphoSitePlus" id="Q5EBI0"/>
<dbReference type="PaxDb" id="10090-ENSMUSP00000092904"/>
<dbReference type="Ensembl" id="ENSMUST00000222911.3">
    <property type="protein sequence ID" value="ENSMUSP00000152871.2"/>
    <property type="gene ID" value="ENSMUSG00000040441.13"/>
</dbReference>
<dbReference type="GeneID" id="216441"/>
<dbReference type="AGR" id="MGI:2143920"/>
<dbReference type="MGI" id="MGI:2143920">
    <property type="gene designation" value="Slc26a10"/>
</dbReference>
<dbReference type="VEuPathDB" id="HostDB:ENSMUSG00000040441"/>
<dbReference type="eggNOG" id="KOG0236">
    <property type="taxonomic scope" value="Eukaryota"/>
</dbReference>
<dbReference type="GeneTree" id="ENSGT01070000253775"/>
<dbReference type="InParanoid" id="Q5EBI0"/>
<dbReference type="PhylomeDB" id="Q5EBI0"/>
<dbReference type="PRO" id="PR:Q5EBI0"/>
<dbReference type="Proteomes" id="UP000000589">
    <property type="component" value="Chromosome 10"/>
</dbReference>
<dbReference type="RNAct" id="Q5EBI0">
    <property type="molecule type" value="protein"/>
</dbReference>
<dbReference type="Bgee" id="ENSMUSG00000040441">
    <property type="expression patterns" value="Expressed in heart and 68 other cell types or tissues"/>
</dbReference>
<dbReference type="ExpressionAtlas" id="Q5EBI0">
    <property type="expression patterns" value="baseline and differential"/>
</dbReference>
<dbReference type="GO" id="GO:0016020">
    <property type="term" value="C:membrane"/>
    <property type="evidence" value="ECO:0007669"/>
    <property type="project" value="UniProtKB-SubCell"/>
</dbReference>
<dbReference type="GO" id="GO:0015297">
    <property type="term" value="F:antiporter activity"/>
    <property type="evidence" value="ECO:0007669"/>
    <property type="project" value="UniProtKB-KW"/>
</dbReference>
<dbReference type="CDD" id="cd07042">
    <property type="entry name" value="STAS_SulP_like_sulfate_transporter"/>
    <property type="match status" value="1"/>
</dbReference>
<dbReference type="Gene3D" id="3.30.750.24">
    <property type="entry name" value="STAS domain"/>
    <property type="match status" value="1"/>
</dbReference>
<dbReference type="InterPro" id="IPR011547">
    <property type="entry name" value="SLC26A/SulP_dom"/>
</dbReference>
<dbReference type="InterPro" id="IPR001902">
    <property type="entry name" value="SLC26A/SulP_fam"/>
</dbReference>
<dbReference type="InterPro" id="IPR002645">
    <property type="entry name" value="STAS_dom"/>
</dbReference>
<dbReference type="InterPro" id="IPR036513">
    <property type="entry name" value="STAS_dom_sf"/>
</dbReference>
<dbReference type="NCBIfam" id="TIGR00815">
    <property type="entry name" value="sulP"/>
    <property type="match status" value="1"/>
</dbReference>
<dbReference type="PANTHER" id="PTHR11814">
    <property type="entry name" value="SULFATE TRANSPORTER"/>
    <property type="match status" value="1"/>
</dbReference>
<dbReference type="Pfam" id="PF01740">
    <property type="entry name" value="STAS"/>
    <property type="match status" value="1"/>
</dbReference>
<dbReference type="Pfam" id="PF00916">
    <property type="entry name" value="Sulfate_transp"/>
    <property type="match status" value="1"/>
</dbReference>
<dbReference type="SUPFAM" id="SSF52091">
    <property type="entry name" value="SpoIIaa-like"/>
    <property type="match status" value="1"/>
</dbReference>
<dbReference type="PROSITE" id="PS50801">
    <property type="entry name" value="STAS"/>
    <property type="match status" value="1"/>
</dbReference>
<proteinExistence type="evidence at transcript level"/>
<name>S2610_MOUSE</name>
<feature type="chain" id="PRO_0000344231" description="Solute carrier family 26 member 10">
    <location>
        <begin position="1"/>
        <end position="676"/>
    </location>
</feature>
<feature type="transmembrane region" description="Helical" evidence="2">
    <location>
        <begin position="101"/>
        <end position="121"/>
    </location>
</feature>
<feature type="transmembrane region" description="Helical" evidence="2">
    <location>
        <begin position="124"/>
        <end position="144"/>
    </location>
</feature>
<feature type="transmembrane region" description="Helical" evidence="2">
    <location>
        <begin position="149"/>
        <end position="165"/>
    </location>
</feature>
<feature type="transmembrane region" description="Helical" evidence="2">
    <location>
        <begin position="190"/>
        <end position="210"/>
    </location>
</feature>
<feature type="transmembrane region" description="Helical" evidence="2">
    <location>
        <begin position="226"/>
        <end position="246"/>
    </location>
</feature>
<feature type="transmembrane region" description="Helical" evidence="2">
    <location>
        <begin position="267"/>
        <end position="287"/>
    </location>
</feature>
<feature type="transmembrane region" description="Helical" evidence="2">
    <location>
        <begin position="300"/>
        <end position="320"/>
    </location>
</feature>
<feature type="transmembrane region" description="Helical" evidence="2">
    <location>
        <begin position="353"/>
        <end position="373"/>
    </location>
</feature>
<feature type="transmembrane region" description="Helical" evidence="2">
    <location>
        <begin position="398"/>
        <end position="418"/>
    </location>
</feature>
<feature type="transmembrane region" description="Helical" evidence="2">
    <location>
        <begin position="426"/>
        <end position="446"/>
    </location>
</feature>
<feature type="transmembrane region" description="Helical" evidence="2">
    <location>
        <begin position="487"/>
        <end position="507"/>
    </location>
</feature>
<feature type="domain" description="STAS" evidence="3">
    <location>
        <begin position="539"/>
        <end position="660"/>
    </location>
</feature>
<feature type="region of interest" description="Disordered" evidence="4">
    <location>
        <begin position="1"/>
        <end position="24"/>
    </location>
</feature>
<evidence type="ECO:0000250" key="1"/>
<evidence type="ECO:0000255" key="2"/>
<evidence type="ECO:0000255" key="3">
    <source>
        <dbReference type="PROSITE-ProRule" id="PRU00198"/>
    </source>
</evidence>
<evidence type="ECO:0000256" key="4">
    <source>
        <dbReference type="SAM" id="MobiDB-lite"/>
    </source>
</evidence>
<evidence type="ECO:0000305" key="5"/>
<evidence type="ECO:0000312" key="6">
    <source>
        <dbReference type="Proteomes" id="UP000000589"/>
    </source>
</evidence>
<protein>
    <recommendedName>
        <fullName>Solute carrier family 26 member 10</fullName>
    </recommendedName>
</protein>
<sequence>MSGPLASGTCSDPEEVSDLKSPLSSRFREPLTHARFQELFGGAEPEPELPAEPCLPCLCRLRRRRASACSGPGAWRVLLARLPPLRWLPQYRWRAWLLGDAVAGVTVGVVHVPQGMAFALLTSVPPVFGLYTSFFPVLIYSLLGTGRHLSTGTFAVLSLMTGSVVERVVPEPLAGNLSGIEREQLEARRVGAAAAVAFGSGALMLGMFVLQLGVLSTFLSEPVIKALTSGAALHVLVSQLPSLLGLSLPRQIGCFSLFKTLAAVLSALSQSSPAEVTISALSLVLLVPVKELNVRFRDRLLTPIPGEVVMVLLATVLCFTSSLDTRYNVQVVGPLPGGFPQPLLPTLDELPRILADSLPISLVTFAVSTSLASIYADKYSYTIEPNQELLAHGVSNLISSLFSCFPNSATLATTSLLVDAGGNTQLAGLFSCAVVLAALLWLRPFFYYLPKAVLACINISSMRQMFFQMQELPQLWHISHVDFAVWIVTWVAVVTLNVDLGLAVGVVVSMMTVVCRTQRVQCLELGLAEGTELYRPIRESRKLLQVPGLCILSYPAPLYFATRGQFHRILEWHLGLGERIKPGAEPVRVAILDFSGITFVDAAGAREVVQLTRRCQDDGIYLLLAQCNALVLETLTRARLLDSVSPEQLFVSVQDAAAHALERLKPTGPKICTVWV</sequence>
<gene>
    <name type="primary">Slc26a10</name>
</gene>
<comment type="function">
    <text evidence="1">Chloride/bicarbonate exchanger.</text>
</comment>
<comment type="subcellular location">
    <subcellularLocation>
        <location evidence="5">Membrane</location>
        <topology evidence="5">Multi-pass membrane protein</topology>
    </subcellularLocation>
</comment>
<comment type="similarity">
    <text evidence="5">Belongs to the SLC26A/SulP transporter (TC 2.A.53) family.</text>
</comment>
<comment type="sequence caution" evidence="5">
    <conflict type="miscellaneous discrepancy">
        <sequence resource="EMBL-CDS" id="AAH89587"/>
    </conflict>
    <text>Probable cloning artifact.</text>
</comment>
<keyword id="KW-0050">Antiport</keyword>
<keyword id="KW-0868">Chloride</keyword>
<keyword id="KW-0472">Membrane</keyword>
<keyword id="KW-1185">Reference proteome</keyword>
<keyword id="KW-0812">Transmembrane</keyword>
<keyword id="KW-1133">Transmembrane helix</keyword>
<keyword id="KW-0813">Transport</keyword>
<reference evidence="6" key="1">
    <citation type="journal article" date="2009" name="PLoS Biol.">
        <title>Lineage-specific biology revealed by a finished genome assembly of the mouse.</title>
        <authorList>
            <person name="Church D.M."/>
            <person name="Goodstadt L."/>
            <person name="Hillier L.W."/>
            <person name="Zody M.C."/>
            <person name="Goldstein S."/>
            <person name="She X."/>
            <person name="Bult C.J."/>
            <person name="Agarwala R."/>
            <person name="Cherry J.L."/>
            <person name="DiCuccio M."/>
            <person name="Hlavina W."/>
            <person name="Kapustin Y."/>
            <person name="Meric P."/>
            <person name="Maglott D."/>
            <person name="Birtle Z."/>
            <person name="Marques A.C."/>
            <person name="Graves T."/>
            <person name="Zhou S."/>
            <person name="Teague B."/>
            <person name="Potamousis K."/>
            <person name="Churas C."/>
            <person name="Place M."/>
            <person name="Herschleb J."/>
            <person name="Runnheim R."/>
            <person name="Forrest D."/>
            <person name="Amos-Landgraf J."/>
            <person name="Schwartz D.C."/>
            <person name="Cheng Z."/>
            <person name="Lindblad-Toh K."/>
            <person name="Eichler E.E."/>
            <person name="Ponting C.P."/>
        </authorList>
    </citation>
    <scope>NUCLEOTIDE SEQUENCE [LARGE SCALE GENOMIC DNA]</scope>
    <source>
        <strain evidence="6">C57BL/6J</strain>
    </source>
</reference>
<reference key="2">
    <citation type="journal article" date="2004" name="Genome Res.">
        <title>The status, quality, and expansion of the NIH full-length cDNA project: the Mammalian Gene Collection (MGC).</title>
        <authorList>
            <consortium name="The MGC Project Team"/>
        </authorList>
    </citation>
    <scope>NUCLEOTIDE SEQUENCE [LARGE SCALE MRNA]</scope>
    <source>
        <tissue>Heart</tissue>
    </source>
</reference>